<reference key="1">
    <citation type="submission" date="2007-06" db="EMBL/GenBank/DDBJ databases">
        <authorList>
            <person name="Dodson R.J."/>
            <person name="Harkins D."/>
            <person name="Paulsen I.T."/>
        </authorList>
    </citation>
    <scope>NUCLEOTIDE SEQUENCE [LARGE SCALE GENOMIC DNA]</scope>
    <source>
        <strain>DSM 24068 / PA7</strain>
    </source>
</reference>
<accession>A6VB93</accession>
<organism>
    <name type="scientific">Pseudomonas paraeruginosa (strain DSM 24068 / PA7)</name>
    <name type="common">Pseudomonas aeruginosa (strain PA7)</name>
    <dbReference type="NCBI Taxonomy" id="381754"/>
    <lineage>
        <taxon>Bacteria</taxon>
        <taxon>Pseudomonadati</taxon>
        <taxon>Pseudomonadota</taxon>
        <taxon>Gammaproteobacteria</taxon>
        <taxon>Pseudomonadales</taxon>
        <taxon>Pseudomonadaceae</taxon>
        <taxon>Pseudomonas</taxon>
        <taxon>Pseudomonas paraeruginosa</taxon>
    </lineage>
</organism>
<gene>
    <name evidence="1" type="primary">rsmH</name>
    <name type="synonym">mraW</name>
    <name type="ordered locus">PSPA7_4992</name>
</gene>
<evidence type="ECO:0000255" key="1">
    <source>
        <dbReference type="HAMAP-Rule" id="MF_01007"/>
    </source>
</evidence>
<sequence length="313" mass="34527">MNATYRHITVLLEEAVSALAPREDGCYLDGTFGRGGHSRALLEKLGTGGRLLGFDKDPQAIQTGKALAAEDGRFVIVQRSFAELGDEVRARGLEGRVDGVLLDLGVSSPQLDDPERGFSFLNDGPLDMRMNPGQGISAAEFIASAAEEEIARVFKEYGEERFAKRMARAIVQRRQERPFERTADLAEVITVANPAWEKGKNPATRAFQGLRIHVNNELGDLERGLDAALESLAVGGRLVVISFHSLEDRIVKLFMRKHAKGEADNLPRDLPIRSKVFEPRLKLLGKPQYASEAELKANPRSRSAVMRVAEKLK</sequence>
<keyword id="KW-0963">Cytoplasm</keyword>
<keyword id="KW-0489">Methyltransferase</keyword>
<keyword id="KW-0698">rRNA processing</keyword>
<keyword id="KW-0949">S-adenosyl-L-methionine</keyword>
<keyword id="KW-0808">Transferase</keyword>
<dbReference type="EC" id="2.1.1.199" evidence="1"/>
<dbReference type="EMBL" id="CP000744">
    <property type="protein sequence ID" value="ABR85489.1"/>
    <property type="molecule type" value="Genomic_DNA"/>
</dbReference>
<dbReference type="RefSeq" id="WP_012077197.1">
    <property type="nucleotide sequence ID" value="NC_009656.1"/>
</dbReference>
<dbReference type="SMR" id="A6VB93"/>
<dbReference type="KEGG" id="pap:PSPA7_4992"/>
<dbReference type="HOGENOM" id="CLU_038422_2_0_6"/>
<dbReference type="Proteomes" id="UP000001582">
    <property type="component" value="Chromosome"/>
</dbReference>
<dbReference type="GO" id="GO:0005737">
    <property type="term" value="C:cytoplasm"/>
    <property type="evidence" value="ECO:0007669"/>
    <property type="project" value="UniProtKB-SubCell"/>
</dbReference>
<dbReference type="GO" id="GO:0071424">
    <property type="term" value="F:rRNA (cytosine-N4-)-methyltransferase activity"/>
    <property type="evidence" value="ECO:0007669"/>
    <property type="project" value="UniProtKB-UniRule"/>
</dbReference>
<dbReference type="GO" id="GO:0070475">
    <property type="term" value="P:rRNA base methylation"/>
    <property type="evidence" value="ECO:0007669"/>
    <property type="project" value="UniProtKB-UniRule"/>
</dbReference>
<dbReference type="FunFam" id="1.10.150.170:FF:000003">
    <property type="entry name" value="Ribosomal RNA small subunit methyltransferase H"/>
    <property type="match status" value="1"/>
</dbReference>
<dbReference type="Gene3D" id="1.10.150.170">
    <property type="entry name" value="Putative methyltransferase TM0872, insert domain"/>
    <property type="match status" value="1"/>
</dbReference>
<dbReference type="Gene3D" id="3.40.50.150">
    <property type="entry name" value="Vaccinia Virus protein VP39"/>
    <property type="match status" value="1"/>
</dbReference>
<dbReference type="HAMAP" id="MF_01007">
    <property type="entry name" value="16SrRNA_methyltr_H"/>
    <property type="match status" value="1"/>
</dbReference>
<dbReference type="InterPro" id="IPR002903">
    <property type="entry name" value="RsmH"/>
</dbReference>
<dbReference type="InterPro" id="IPR023397">
    <property type="entry name" value="SAM-dep_MeTrfase_MraW_recog"/>
</dbReference>
<dbReference type="InterPro" id="IPR029063">
    <property type="entry name" value="SAM-dependent_MTases_sf"/>
</dbReference>
<dbReference type="NCBIfam" id="TIGR00006">
    <property type="entry name" value="16S rRNA (cytosine(1402)-N(4))-methyltransferase RsmH"/>
    <property type="match status" value="1"/>
</dbReference>
<dbReference type="PANTHER" id="PTHR11265:SF0">
    <property type="entry name" value="12S RRNA N4-METHYLCYTIDINE METHYLTRANSFERASE"/>
    <property type="match status" value="1"/>
</dbReference>
<dbReference type="PANTHER" id="PTHR11265">
    <property type="entry name" value="S-ADENOSYL-METHYLTRANSFERASE MRAW"/>
    <property type="match status" value="1"/>
</dbReference>
<dbReference type="Pfam" id="PF01795">
    <property type="entry name" value="Methyltransf_5"/>
    <property type="match status" value="1"/>
</dbReference>
<dbReference type="PIRSF" id="PIRSF004486">
    <property type="entry name" value="MraW"/>
    <property type="match status" value="1"/>
</dbReference>
<dbReference type="SUPFAM" id="SSF81799">
    <property type="entry name" value="Putative methyltransferase TM0872, insert domain"/>
    <property type="match status" value="1"/>
</dbReference>
<dbReference type="SUPFAM" id="SSF53335">
    <property type="entry name" value="S-adenosyl-L-methionine-dependent methyltransferases"/>
    <property type="match status" value="1"/>
</dbReference>
<proteinExistence type="inferred from homology"/>
<name>RSMH_PSEP7</name>
<protein>
    <recommendedName>
        <fullName evidence="1">Ribosomal RNA small subunit methyltransferase H</fullName>
        <ecNumber evidence="1">2.1.1.199</ecNumber>
    </recommendedName>
    <alternativeName>
        <fullName evidence="1">16S rRNA m(4)C1402 methyltransferase</fullName>
    </alternativeName>
    <alternativeName>
        <fullName evidence="1">rRNA (cytosine-N(4)-)-methyltransferase RsmH</fullName>
    </alternativeName>
</protein>
<feature type="chain" id="PRO_0000387050" description="Ribosomal RNA small subunit methyltransferase H">
    <location>
        <begin position="1"/>
        <end position="313"/>
    </location>
</feature>
<feature type="binding site" evidence="1">
    <location>
        <begin position="35"/>
        <end position="37"/>
    </location>
    <ligand>
        <name>S-adenosyl-L-methionine</name>
        <dbReference type="ChEBI" id="CHEBI:59789"/>
    </ligand>
</feature>
<feature type="binding site" evidence="1">
    <location>
        <position position="55"/>
    </location>
    <ligand>
        <name>S-adenosyl-L-methionine</name>
        <dbReference type="ChEBI" id="CHEBI:59789"/>
    </ligand>
</feature>
<feature type="binding site" evidence="1">
    <location>
        <position position="81"/>
    </location>
    <ligand>
        <name>S-adenosyl-L-methionine</name>
        <dbReference type="ChEBI" id="CHEBI:59789"/>
    </ligand>
</feature>
<feature type="binding site" evidence="1">
    <location>
        <position position="103"/>
    </location>
    <ligand>
        <name>S-adenosyl-L-methionine</name>
        <dbReference type="ChEBI" id="CHEBI:59789"/>
    </ligand>
</feature>
<feature type="binding site" evidence="1">
    <location>
        <position position="110"/>
    </location>
    <ligand>
        <name>S-adenosyl-L-methionine</name>
        <dbReference type="ChEBI" id="CHEBI:59789"/>
    </ligand>
</feature>
<comment type="function">
    <text evidence="1">Specifically methylates the N4 position of cytidine in position 1402 (C1402) of 16S rRNA.</text>
</comment>
<comment type="catalytic activity">
    <reaction evidence="1">
        <text>cytidine(1402) in 16S rRNA + S-adenosyl-L-methionine = N(4)-methylcytidine(1402) in 16S rRNA + S-adenosyl-L-homocysteine + H(+)</text>
        <dbReference type="Rhea" id="RHEA:42928"/>
        <dbReference type="Rhea" id="RHEA-COMP:10286"/>
        <dbReference type="Rhea" id="RHEA-COMP:10287"/>
        <dbReference type="ChEBI" id="CHEBI:15378"/>
        <dbReference type="ChEBI" id="CHEBI:57856"/>
        <dbReference type="ChEBI" id="CHEBI:59789"/>
        <dbReference type="ChEBI" id="CHEBI:74506"/>
        <dbReference type="ChEBI" id="CHEBI:82748"/>
        <dbReference type="EC" id="2.1.1.199"/>
    </reaction>
</comment>
<comment type="subcellular location">
    <subcellularLocation>
        <location evidence="1">Cytoplasm</location>
    </subcellularLocation>
</comment>
<comment type="similarity">
    <text evidence="1">Belongs to the methyltransferase superfamily. RsmH family.</text>
</comment>